<evidence type="ECO:0000255" key="1">
    <source>
        <dbReference type="HAMAP-Rule" id="MF_01331"/>
    </source>
</evidence>
<evidence type="ECO:0000256" key="2">
    <source>
        <dbReference type="SAM" id="MobiDB-lite"/>
    </source>
</evidence>
<evidence type="ECO:0000305" key="3"/>
<accession>A7HBM3</accession>
<keyword id="KW-1185">Reference proteome</keyword>
<keyword id="KW-0687">Ribonucleoprotein</keyword>
<keyword id="KW-0689">Ribosomal protein</keyword>
<keyword id="KW-0694">RNA-binding</keyword>
<keyword id="KW-0699">rRNA-binding</keyword>
<dbReference type="EMBL" id="CP000769">
    <property type="protein sequence ID" value="ABS26119.1"/>
    <property type="molecule type" value="Genomic_DNA"/>
</dbReference>
<dbReference type="RefSeq" id="WP_012096698.1">
    <property type="nucleotide sequence ID" value="NC_009675.1"/>
</dbReference>
<dbReference type="SMR" id="A7HBM3"/>
<dbReference type="STRING" id="404589.Anae109_1916"/>
<dbReference type="KEGG" id="afw:Anae109_1916"/>
<dbReference type="eggNOG" id="COG0091">
    <property type="taxonomic scope" value="Bacteria"/>
</dbReference>
<dbReference type="HOGENOM" id="CLU_083987_3_1_7"/>
<dbReference type="OrthoDB" id="9805969at2"/>
<dbReference type="Proteomes" id="UP000006382">
    <property type="component" value="Chromosome"/>
</dbReference>
<dbReference type="GO" id="GO:0022625">
    <property type="term" value="C:cytosolic large ribosomal subunit"/>
    <property type="evidence" value="ECO:0007669"/>
    <property type="project" value="TreeGrafter"/>
</dbReference>
<dbReference type="GO" id="GO:0019843">
    <property type="term" value="F:rRNA binding"/>
    <property type="evidence" value="ECO:0007669"/>
    <property type="project" value="UniProtKB-UniRule"/>
</dbReference>
<dbReference type="GO" id="GO:0003735">
    <property type="term" value="F:structural constituent of ribosome"/>
    <property type="evidence" value="ECO:0007669"/>
    <property type="project" value="InterPro"/>
</dbReference>
<dbReference type="GO" id="GO:0006412">
    <property type="term" value="P:translation"/>
    <property type="evidence" value="ECO:0007669"/>
    <property type="project" value="UniProtKB-UniRule"/>
</dbReference>
<dbReference type="CDD" id="cd00336">
    <property type="entry name" value="Ribosomal_L22"/>
    <property type="match status" value="1"/>
</dbReference>
<dbReference type="Gene3D" id="3.90.470.10">
    <property type="entry name" value="Ribosomal protein L22/L17"/>
    <property type="match status" value="1"/>
</dbReference>
<dbReference type="HAMAP" id="MF_01331_B">
    <property type="entry name" value="Ribosomal_uL22_B"/>
    <property type="match status" value="1"/>
</dbReference>
<dbReference type="InterPro" id="IPR001063">
    <property type="entry name" value="Ribosomal_uL22"/>
</dbReference>
<dbReference type="InterPro" id="IPR005727">
    <property type="entry name" value="Ribosomal_uL22_bac/chlpt-type"/>
</dbReference>
<dbReference type="InterPro" id="IPR047867">
    <property type="entry name" value="Ribosomal_uL22_bac/org-type"/>
</dbReference>
<dbReference type="InterPro" id="IPR018260">
    <property type="entry name" value="Ribosomal_uL22_CS"/>
</dbReference>
<dbReference type="InterPro" id="IPR036394">
    <property type="entry name" value="Ribosomal_uL22_sf"/>
</dbReference>
<dbReference type="NCBIfam" id="TIGR01044">
    <property type="entry name" value="rplV_bact"/>
    <property type="match status" value="1"/>
</dbReference>
<dbReference type="PANTHER" id="PTHR13501">
    <property type="entry name" value="CHLOROPLAST 50S RIBOSOMAL PROTEIN L22-RELATED"/>
    <property type="match status" value="1"/>
</dbReference>
<dbReference type="PANTHER" id="PTHR13501:SF8">
    <property type="entry name" value="LARGE RIBOSOMAL SUBUNIT PROTEIN UL22M"/>
    <property type="match status" value="1"/>
</dbReference>
<dbReference type="Pfam" id="PF00237">
    <property type="entry name" value="Ribosomal_L22"/>
    <property type="match status" value="1"/>
</dbReference>
<dbReference type="SUPFAM" id="SSF54843">
    <property type="entry name" value="Ribosomal protein L22"/>
    <property type="match status" value="1"/>
</dbReference>
<dbReference type="PROSITE" id="PS00464">
    <property type="entry name" value="RIBOSOMAL_L22"/>
    <property type="match status" value="1"/>
</dbReference>
<gene>
    <name evidence="1" type="primary">rplV</name>
    <name type="ordered locus">Anae109_1916</name>
</gene>
<name>RL22_ANADF</name>
<protein>
    <recommendedName>
        <fullName evidence="1">Large ribosomal subunit protein uL22</fullName>
    </recommendedName>
    <alternativeName>
        <fullName evidence="3">50S ribosomal protein L22</fullName>
    </alternativeName>
</protein>
<comment type="function">
    <text evidence="1">This protein binds specifically to 23S rRNA; its binding is stimulated by other ribosomal proteins, e.g. L4, L17, and L20. It is important during the early stages of 50S assembly. It makes multiple contacts with different domains of the 23S rRNA in the assembled 50S subunit and ribosome (By similarity).</text>
</comment>
<comment type="function">
    <text evidence="1">The globular domain of the protein is located near the polypeptide exit tunnel on the outside of the subunit, while an extended beta-hairpin is found that lines the wall of the exit tunnel in the center of the 70S ribosome.</text>
</comment>
<comment type="subunit">
    <text evidence="1">Part of the 50S ribosomal subunit.</text>
</comment>
<comment type="similarity">
    <text evidence="1">Belongs to the universal ribosomal protein uL22 family.</text>
</comment>
<proteinExistence type="inferred from homology"/>
<reference key="1">
    <citation type="journal article" date="2015" name="Genome Announc.">
        <title>Complete genome sequence of Anaeromyxobacter sp. Fw109-5, an anaerobic, metal-reducing bacterium isolated from a contaminated subsurface environment.</title>
        <authorList>
            <person name="Hwang C."/>
            <person name="Copeland A."/>
            <person name="Lucas S."/>
            <person name="Lapidus A."/>
            <person name="Barry K."/>
            <person name="Glavina Del Rio T."/>
            <person name="Dalin E."/>
            <person name="Tice H."/>
            <person name="Pitluck S."/>
            <person name="Sims D."/>
            <person name="Brettin T."/>
            <person name="Bruce D.C."/>
            <person name="Detter J.C."/>
            <person name="Han C.S."/>
            <person name="Schmutz J."/>
            <person name="Larimer F.W."/>
            <person name="Land M.L."/>
            <person name="Hauser L.J."/>
            <person name="Kyrpides N."/>
            <person name="Lykidis A."/>
            <person name="Richardson P."/>
            <person name="Belieav A."/>
            <person name="Sanford R.A."/>
            <person name="Loeffler F.E."/>
            <person name="Fields M.W."/>
        </authorList>
    </citation>
    <scope>NUCLEOTIDE SEQUENCE [LARGE SCALE GENOMIC DNA]</scope>
    <source>
        <strain>Fw109-5</strain>
    </source>
</reference>
<organism>
    <name type="scientific">Anaeromyxobacter sp. (strain Fw109-5)</name>
    <dbReference type="NCBI Taxonomy" id="404589"/>
    <lineage>
        <taxon>Bacteria</taxon>
        <taxon>Pseudomonadati</taxon>
        <taxon>Myxococcota</taxon>
        <taxon>Myxococcia</taxon>
        <taxon>Myxococcales</taxon>
        <taxon>Cystobacterineae</taxon>
        <taxon>Anaeromyxobacteraceae</taxon>
        <taxon>Anaeromyxobacter</taxon>
    </lineage>
</organism>
<feature type="chain" id="PRO_1000052536" description="Large ribosomal subunit protein uL22">
    <location>
        <begin position="1"/>
        <end position="144"/>
    </location>
</feature>
<feature type="region of interest" description="Disordered" evidence="2">
    <location>
        <begin position="1"/>
        <end position="38"/>
    </location>
</feature>
<feature type="compositionally biased region" description="Basic residues" evidence="2">
    <location>
        <begin position="9"/>
        <end position="27"/>
    </location>
</feature>
<sequence length="144" mass="15743">MAETQTTKKGAKRVRQPVPARRSKPNRPAKAAPGPHASLSFLRVAPRKVRLVADEVRGMPVGDALAVLKYTPQAAAKHLSKLIRSAVANAEQKGGRVDVDVLVVKTLTVDQGPKMRRFMPRAMGRAFRIEKKTSHVYVELGTAQ</sequence>